<keyword id="KW-0997">Cell inner membrane</keyword>
<keyword id="KW-1003">Cell membrane</keyword>
<keyword id="KW-0342">GTP-binding</keyword>
<keyword id="KW-0378">Hydrolase</keyword>
<keyword id="KW-0472">Membrane</keyword>
<keyword id="KW-0547">Nucleotide-binding</keyword>
<keyword id="KW-0648">Protein biosynthesis</keyword>
<keyword id="KW-1185">Reference proteome</keyword>
<dbReference type="EC" id="3.6.5.n1" evidence="1"/>
<dbReference type="EMBL" id="CP000377">
    <property type="protein sequence ID" value="ABF63411.1"/>
    <property type="molecule type" value="Genomic_DNA"/>
</dbReference>
<dbReference type="RefSeq" id="WP_011538023.1">
    <property type="nucleotide sequence ID" value="NC_008044.1"/>
</dbReference>
<dbReference type="SMR" id="Q1GIV5"/>
<dbReference type="STRING" id="292414.TM1040_0678"/>
<dbReference type="KEGG" id="sit:TM1040_0678"/>
<dbReference type="eggNOG" id="COG0481">
    <property type="taxonomic scope" value="Bacteria"/>
</dbReference>
<dbReference type="HOGENOM" id="CLU_009995_3_3_5"/>
<dbReference type="OrthoDB" id="9802948at2"/>
<dbReference type="Proteomes" id="UP000000636">
    <property type="component" value="Chromosome"/>
</dbReference>
<dbReference type="GO" id="GO:0005886">
    <property type="term" value="C:plasma membrane"/>
    <property type="evidence" value="ECO:0007669"/>
    <property type="project" value="UniProtKB-SubCell"/>
</dbReference>
<dbReference type="GO" id="GO:0005525">
    <property type="term" value="F:GTP binding"/>
    <property type="evidence" value="ECO:0007669"/>
    <property type="project" value="UniProtKB-UniRule"/>
</dbReference>
<dbReference type="GO" id="GO:0003924">
    <property type="term" value="F:GTPase activity"/>
    <property type="evidence" value="ECO:0007669"/>
    <property type="project" value="UniProtKB-UniRule"/>
</dbReference>
<dbReference type="GO" id="GO:0097216">
    <property type="term" value="F:guanosine tetraphosphate binding"/>
    <property type="evidence" value="ECO:0007669"/>
    <property type="project" value="UniProtKB-ARBA"/>
</dbReference>
<dbReference type="GO" id="GO:0043022">
    <property type="term" value="F:ribosome binding"/>
    <property type="evidence" value="ECO:0007669"/>
    <property type="project" value="UniProtKB-UniRule"/>
</dbReference>
<dbReference type="GO" id="GO:0003746">
    <property type="term" value="F:translation elongation factor activity"/>
    <property type="evidence" value="ECO:0007669"/>
    <property type="project" value="UniProtKB-UniRule"/>
</dbReference>
<dbReference type="GO" id="GO:0045727">
    <property type="term" value="P:positive regulation of translation"/>
    <property type="evidence" value="ECO:0007669"/>
    <property type="project" value="UniProtKB-UniRule"/>
</dbReference>
<dbReference type="CDD" id="cd03699">
    <property type="entry name" value="EF4_II"/>
    <property type="match status" value="1"/>
</dbReference>
<dbReference type="CDD" id="cd16260">
    <property type="entry name" value="EF4_III"/>
    <property type="match status" value="1"/>
</dbReference>
<dbReference type="CDD" id="cd01890">
    <property type="entry name" value="LepA"/>
    <property type="match status" value="1"/>
</dbReference>
<dbReference type="CDD" id="cd03709">
    <property type="entry name" value="lepA_C"/>
    <property type="match status" value="1"/>
</dbReference>
<dbReference type="FunFam" id="3.40.50.300:FF:000078">
    <property type="entry name" value="Elongation factor 4"/>
    <property type="match status" value="1"/>
</dbReference>
<dbReference type="FunFam" id="2.40.30.10:FF:000015">
    <property type="entry name" value="Translation factor GUF1, mitochondrial"/>
    <property type="match status" value="1"/>
</dbReference>
<dbReference type="FunFam" id="3.30.70.240:FF:000007">
    <property type="entry name" value="Translation factor GUF1, mitochondrial"/>
    <property type="match status" value="1"/>
</dbReference>
<dbReference type="FunFam" id="3.30.70.2570:FF:000001">
    <property type="entry name" value="Translation factor GUF1, mitochondrial"/>
    <property type="match status" value="1"/>
</dbReference>
<dbReference type="FunFam" id="3.30.70.870:FF:000004">
    <property type="entry name" value="Translation factor GUF1, mitochondrial"/>
    <property type="match status" value="1"/>
</dbReference>
<dbReference type="Gene3D" id="3.30.70.240">
    <property type="match status" value="1"/>
</dbReference>
<dbReference type="Gene3D" id="3.30.70.2570">
    <property type="entry name" value="Elongation factor 4, C-terminal domain"/>
    <property type="match status" value="1"/>
</dbReference>
<dbReference type="Gene3D" id="3.30.70.870">
    <property type="entry name" value="Elongation Factor G (Translational Gtpase), domain 3"/>
    <property type="match status" value="1"/>
</dbReference>
<dbReference type="Gene3D" id="3.40.50.300">
    <property type="entry name" value="P-loop containing nucleotide triphosphate hydrolases"/>
    <property type="match status" value="1"/>
</dbReference>
<dbReference type="Gene3D" id="2.40.30.10">
    <property type="entry name" value="Translation factors"/>
    <property type="match status" value="1"/>
</dbReference>
<dbReference type="HAMAP" id="MF_00071">
    <property type="entry name" value="LepA"/>
    <property type="match status" value="1"/>
</dbReference>
<dbReference type="InterPro" id="IPR006297">
    <property type="entry name" value="EF-4"/>
</dbReference>
<dbReference type="InterPro" id="IPR035647">
    <property type="entry name" value="EFG_III/V"/>
</dbReference>
<dbReference type="InterPro" id="IPR000640">
    <property type="entry name" value="EFG_V-like"/>
</dbReference>
<dbReference type="InterPro" id="IPR004161">
    <property type="entry name" value="EFTu-like_2"/>
</dbReference>
<dbReference type="InterPro" id="IPR031157">
    <property type="entry name" value="G_TR_CS"/>
</dbReference>
<dbReference type="InterPro" id="IPR038363">
    <property type="entry name" value="LepA_C_sf"/>
</dbReference>
<dbReference type="InterPro" id="IPR013842">
    <property type="entry name" value="LepA_CTD"/>
</dbReference>
<dbReference type="InterPro" id="IPR035654">
    <property type="entry name" value="LepA_IV"/>
</dbReference>
<dbReference type="InterPro" id="IPR027417">
    <property type="entry name" value="P-loop_NTPase"/>
</dbReference>
<dbReference type="InterPro" id="IPR005225">
    <property type="entry name" value="Small_GTP-bd"/>
</dbReference>
<dbReference type="InterPro" id="IPR000795">
    <property type="entry name" value="T_Tr_GTP-bd_dom"/>
</dbReference>
<dbReference type="NCBIfam" id="TIGR01393">
    <property type="entry name" value="lepA"/>
    <property type="match status" value="1"/>
</dbReference>
<dbReference type="NCBIfam" id="TIGR00231">
    <property type="entry name" value="small_GTP"/>
    <property type="match status" value="1"/>
</dbReference>
<dbReference type="PANTHER" id="PTHR43512:SF4">
    <property type="entry name" value="TRANSLATION FACTOR GUF1 HOMOLOG, CHLOROPLASTIC"/>
    <property type="match status" value="1"/>
</dbReference>
<dbReference type="PANTHER" id="PTHR43512">
    <property type="entry name" value="TRANSLATION FACTOR GUF1-RELATED"/>
    <property type="match status" value="1"/>
</dbReference>
<dbReference type="Pfam" id="PF00679">
    <property type="entry name" value="EFG_C"/>
    <property type="match status" value="1"/>
</dbReference>
<dbReference type="Pfam" id="PF00009">
    <property type="entry name" value="GTP_EFTU"/>
    <property type="match status" value="1"/>
</dbReference>
<dbReference type="Pfam" id="PF03144">
    <property type="entry name" value="GTP_EFTU_D2"/>
    <property type="match status" value="1"/>
</dbReference>
<dbReference type="Pfam" id="PF06421">
    <property type="entry name" value="LepA_C"/>
    <property type="match status" value="1"/>
</dbReference>
<dbReference type="PRINTS" id="PR00315">
    <property type="entry name" value="ELONGATNFCT"/>
</dbReference>
<dbReference type="SMART" id="SM00838">
    <property type="entry name" value="EFG_C"/>
    <property type="match status" value="1"/>
</dbReference>
<dbReference type="SUPFAM" id="SSF54980">
    <property type="entry name" value="EF-G C-terminal domain-like"/>
    <property type="match status" value="2"/>
</dbReference>
<dbReference type="SUPFAM" id="SSF52540">
    <property type="entry name" value="P-loop containing nucleoside triphosphate hydrolases"/>
    <property type="match status" value="1"/>
</dbReference>
<dbReference type="PROSITE" id="PS00301">
    <property type="entry name" value="G_TR_1"/>
    <property type="match status" value="1"/>
</dbReference>
<dbReference type="PROSITE" id="PS51722">
    <property type="entry name" value="G_TR_2"/>
    <property type="match status" value="1"/>
</dbReference>
<feature type="chain" id="PRO_0000265704" description="Elongation factor 4">
    <location>
        <begin position="1"/>
        <end position="599"/>
    </location>
</feature>
<feature type="domain" description="tr-type G">
    <location>
        <begin position="5"/>
        <end position="187"/>
    </location>
</feature>
<feature type="binding site" evidence="1">
    <location>
        <begin position="17"/>
        <end position="22"/>
    </location>
    <ligand>
        <name>GTP</name>
        <dbReference type="ChEBI" id="CHEBI:37565"/>
    </ligand>
</feature>
<feature type="binding site" evidence="1">
    <location>
        <begin position="134"/>
        <end position="137"/>
    </location>
    <ligand>
        <name>GTP</name>
        <dbReference type="ChEBI" id="CHEBI:37565"/>
    </ligand>
</feature>
<proteinExistence type="inferred from homology"/>
<comment type="function">
    <text evidence="1">Required for accurate and efficient protein synthesis under certain stress conditions. May act as a fidelity factor of the translation reaction, by catalyzing a one-codon backward translocation of tRNAs on improperly translocated ribosomes. Back-translocation proceeds from a post-translocation (POST) complex to a pre-translocation (PRE) complex, thus giving elongation factor G a second chance to translocate the tRNAs correctly. Binds to ribosomes in a GTP-dependent manner.</text>
</comment>
<comment type="catalytic activity">
    <reaction evidence="1">
        <text>GTP + H2O = GDP + phosphate + H(+)</text>
        <dbReference type="Rhea" id="RHEA:19669"/>
        <dbReference type="ChEBI" id="CHEBI:15377"/>
        <dbReference type="ChEBI" id="CHEBI:15378"/>
        <dbReference type="ChEBI" id="CHEBI:37565"/>
        <dbReference type="ChEBI" id="CHEBI:43474"/>
        <dbReference type="ChEBI" id="CHEBI:58189"/>
        <dbReference type="EC" id="3.6.5.n1"/>
    </reaction>
</comment>
<comment type="subcellular location">
    <subcellularLocation>
        <location evidence="1">Cell inner membrane</location>
        <topology evidence="1">Peripheral membrane protein</topology>
        <orientation evidence="1">Cytoplasmic side</orientation>
    </subcellularLocation>
</comment>
<comment type="similarity">
    <text evidence="1">Belongs to the TRAFAC class translation factor GTPase superfamily. Classic translation factor GTPase family. LepA subfamily.</text>
</comment>
<organism>
    <name type="scientific">Ruegeria sp. (strain TM1040)</name>
    <name type="common">Silicibacter sp.</name>
    <dbReference type="NCBI Taxonomy" id="292414"/>
    <lineage>
        <taxon>Bacteria</taxon>
        <taxon>Pseudomonadati</taxon>
        <taxon>Pseudomonadota</taxon>
        <taxon>Alphaproteobacteria</taxon>
        <taxon>Rhodobacterales</taxon>
        <taxon>Roseobacteraceae</taxon>
        <taxon>Ruegeria</taxon>
    </lineage>
</organism>
<evidence type="ECO:0000255" key="1">
    <source>
        <dbReference type="HAMAP-Rule" id="MF_00071"/>
    </source>
</evidence>
<gene>
    <name evidence="1" type="primary">lepA</name>
    <name type="ordered locus">TM1040_0678</name>
</gene>
<protein>
    <recommendedName>
        <fullName evidence="1">Elongation factor 4</fullName>
        <shortName evidence="1">EF-4</shortName>
        <ecNumber evidence="1">3.6.5.n1</ecNumber>
    </recommendedName>
    <alternativeName>
        <fullName evidence="1">Ribosomal back-translocase LepA</fullName>
    </alternativeName>
</protein>
<name>LEPA_RUEST</name>
<accession>Q1GIV5</accession>
<reference key="1">
    <citation type="submission" date="2006-05" db="EMBL/GenBank/DDBJ databases">
        <title>Complete sequence of chromosome of Silicibacter sp. TM1040.</title>
        <authorList>
            <consortium name="US DOE Joint Genome Institute"/>
            <person name="Copeland A."/>
            <person name="Lucas S."/>
            <person name="Lapidus A."/>
            <person name="Barry K."/>
            <person name="Detter J.C."/>
            <person name="Glavina del Rio T."/>
            <person name="Hammon N."/>
            <person name="Israni S."/>
            <person name="Dalin E."/>
            <person name="Tice H."/>
            <person name="Pitluck S."/>
            <person name="Brettin T."/>
            <person name="Bruce D."/>
            <person name="Han C."/>
            <person name="Tapia R."/>
            <person name="Goodwin L."/>
            <person name="Thompson L.S."/>
            <person name="Gilna P."/>
            <person name="Schmutz J."/>
            <person name="Larimer F."/>
            <person name="Land M."/>
            <person name="Hauser L."/>
            <person name="Kyrpides N."/>
            <person name="Kim E."/>
            <person name="Belas R."/>
            <person name="Moran M.A."/>
            <person name="Buchan A."/>
            <person name="Gonzalez J.M."/>
            <person name="Schell M.A."/>
            <person name="Sun F."/>
            <person name="Richardson P."/>
        </authorList>
    </citation>
    <scope>NUCLEOTIDE SEQUENCE [LARGE SCALE GENOMIC DNA]</scope>
    <source>
        <strain>TM1040</strain>
    </source>
</reference>
<sequence length="599" mass="66851">MTELSKIRNFSIVAHIDHGKSTLADRLIQSTGTVQDRDMKEQLLDAMDIERERGITIKANTVRIDYEADDGERYVLNLIDTPGHVDFAYEVSRSMRAVEGSLLVVDSTQGVEAQTLANVYQAIDADHEIVPVLNKIDLPAADCDRVAEQIEDVIGIDATDAIRVSAKTGIGIKDTLEAIVKRLPAPTGERNAPLKAMLVDSWYDAYLGVIVLVRIMDGVLKKGDQIKMMQTNARYGVDRIGVFRPAMQVVDELGPGEIGFITASIKQVRDTKVGDTITHDKKGAETALPGFKPSVPVVFCGLFPVDSSEFEDLRDAIEKLALNDASFSYEMETSAALGFGFRCGFLGLLHLEVIRDRIEREYNIELITTAPSVVYHIFMKDGEMLELHNPADMPDLSKVDHLEEPRIKATILVPDEYLGDVLKLCQDRRGIQQDLSYAGSRAMVVYDLPLNEVVFDFYDRLKSVTKGYASFDYQMIGYRADNLVKMSVLVNDEPVDALSTMVHRDRAEQRGRAMCEKLKDLIPRHMFKIPIQAAIGGKVIARETLSALRKDVTAKCYGGDATRKRKLLEKQKAGKKKMRQFGRVEIPQEAFISALKMDD</sequence>